<keyword id="KW-0143">Chaperone</keyword>
<keyword id="KW-0413">Isomerase</keyword>
<keyword id="KW-0574">Periplasm</keyword>
<keyword id="KW-0677">Repeat</keyword>
<keyword id="KW-0697">Rotamase</keyword>
<keyword id="KW-0732">Signal</keyword>
<sequence length="452" mass="49014">MKKTLRFAAVVSSLAAASALLAAAPAAAQALGSQGAQLADEVVAVVNNDVITGRELDQRAGLIARRLQQQNAPVPPTDQLRAQVLNQMVLERIQVQKAKDDGIRIDDATVQSTLQRLAQANGMTLEQYRGRLEAQGVPWSVFTSDARTELMLSKLREREVDGKITVSDAEVANYIASQRGPNASQQQDLRFQHIFIKAPTNAPQADIEAAQKKADALLQQAKSGADFEKLAKNNSEANDAKKGGDLGFKAPSALPADVVDAASKLRPGQVNPTLIRVPDGFEIVRLVDRRQSQGATAAAPKIVQTHVRHILLRVGEGKSEGQARQQLADIRNQVEAGGDFAKFARTYSQDGSASQGGDLGWISPGETVPEFERAMNNLQDGQISQPIRTEYGYHLIQVLSRREAEGSVQQQMDIARQAIGQRKAEQAYADWLRELRDSSYVQYKIGGVGPAN</sequence>
<accession>Q39D35</accession>
<feature type="signal peptide" evidence="1">
    <location>
        <begin position="1"/>
        <end position="28"/>
    </location>
</feature>
<feature type="chain" id="PRO_0000270008" description="Chaperone SurA">
    <location>
        <begin position="29"/>
        <end position="452"/>
    </location>
</feature>
<feature type="domain" description="PpiC 1" evidence="1">
    <location>
        <begin position="186"/>
        <end position="288"/>
    </location>
</feature>
<feature type="domain" description="PpiC 2" evidence="1">
    <location>
        <begin position="302"/>
        <end position="400"/>
    </location>
</feature>
<reference key="1">
    <citation type="submission" date="2005-10" db="EMBL/GenBank/DDBJ databases">
        <title>Complete sequence of chromosome 1 of Burkholderia sp. 383.</title>
        <authorList>
            <consortium name="US DOE Joint Genome Institute"/>
            <person name="Copeland A."/>
            <person name="Lucas S."/>
            <person name="Lapidus A."/>
            <person name="Barry K."/>
            <person name="Detter J.C."/>
            <person name="Glavina T."/>
            <person name="Hammon N."/>
            <person name="Israni S."/>
            <person name="Pitluck S."/>
            <person name="Chain P."/>
            <person name="Malfatti S."/>
            <person name="Shin M."/>
            <person name="Vergez L."/>
            <person name="Schmutz J."/>
            <person name="Larimer F."/>
            <person name="Land M."/>
            <person name="Kyrpides N."/>
            <person name="Lykidis A."/>
            <person name="Richardson P."/>
        </authorList>
    </citation>
    <scope>NUCLEOTIDE SEQUENCE [LARGE SCALE GENOMIC DNA]</scope>
    <source>
        <strain>ATCC 17760 / DSM 23089 / LMG 22485 / NCIMB 9086 / R18194 / 383</strain>
    </source>
</reference>
<evidence type="ECO:0000255" key="1">
    <source>
        <dbReference type="HAMAP-Rule" id="MF_01183"/>
    </source>
</evidence>
<gene>
    <name evidence="1" type="primary">surA</name>
    <name type="ordered locus">Bcep18194_A6037</name>
</gene>
<name>SURA_BURL3</name>
<protein>
    <recommendedName>
        <fullName evidence="1">Chaperone SurA</fullName>
    </recommendedName>
    <alternativeName>
        <fullName evidence="1">Peptidyl-prolyl cis-trans isomerase SurA</fullName>
        <shortName evidence="1">PPIase SurA</shortName>
        <ecNumber evidence="1">5.2.1.8</ecNumber>
    </alternativeName>
    <alternativeName>
        <fullName evidence="1">Rotamase SurA</fullName>
    </alternativeName>
</protein>
<dbReference type="EC" id="5.2.1.8" evidence="1"/>
<dbReference type="EMBL" id="CP000151">
    <property type="protein sequence ID" value="ABB09631.1"/>
    <property type="molecule type" value="Genomic_DNA"/>
</dbReference>
<dbReference type="RefSeq" id="WP_011353142.1">
    <property type="nucleotide sequence ID" value="NC_007510.1"/>
</dbReference>
<dbReference type="SMR" id="Q39D35"/>
<dbReference type="GeneID" id="45095920"/>
<dbReference type="KEGG" id="bur:Bcep18194_A6037"/>
<dbReference type="PATRIC" id="fig|482957.22.peg.3037"/>
<dbReference type="HOGENOM" id="CLU_034646_11_0_4"/>
<dbReference type="Proteomes" id="UP000002705">
    <property type="component" value="Chromosome 1"/>
</dbReference>
<dbReference type="GO" id="GO:0030288">
    <property type="term" value="C:outer membrane-bounded periplasmic space"/>
    <property type="evidence" value="ECO:0007669"/>
    <property type="project" value="InterPro"/>
</dbReference>
<dbReference type="GO" id="GO:0042277">
    <property type="term" value="F:peptide binding"/>
    <property type="evidence" value="ECO:0007669"/>
    <property type="project" value="InterPro"/>
</dbReference>
<dbReference type="GO" id="GO:0003755">
    <property type="term" value="F:peptidyl-prolyl cis-trans isomerase activity"/>
    <property type="evidence" value="ECO:0007669"/>
    <property type="project" value="UniProtKB-UniRule"/>
</dbReference>
<dbReference type="GO" id="GO:0051082">
    <property type="term" value="F:unfolded protein binding"/>
    <property type="evidence" value="ECO:0007669"/>
    <property type="project" value="UniProtKB-UniRule"/>
</dbReference>
<dbReference type="GO" id="GO:0043165">
    <property type="term" value="P:Gram-negative-bacterium-type cell outer membrane assembly"/>
    <property type="evidence" value="ECO:0007669"/>
    <property type="project" value="InterPro"/>
</dbReference>
<dbReference type="GO" id="GO:0006457">
    <property type="term" value="P:protein folding"/>
    <property type="evidence" value="ECO:0007669"/>
    <property type="project" value="UniProtKB-UniRule"/>
</dbReference>
<dbReference type="GO" id="GO:0050821">
    <property type="term" value="P:protein stabilization"/>
    <property type="evidence" value="ECO:0007669"/>
    <property type="project" value="InterPro"/>
</dbReference>
<dbReference type="Gene3D" id="3.10.50.40">
    <property type="match status" value="2"/>
</dbReference>
<dbReference type="Gene3D" id="1.10.4030.10">
    <property type="entry name" value="Porin chaperone SurA, peptide-binding domain"/>
    <property type="match status" value="1"/>
</dbReference>
<dbReference type="HAMAP" id="MF_01183">
    <property type="entry name" value="Chaperone_SurA"/>
    <property type="match status" value="1"/>
</dbReference>
<dbReference type="InterPro" id="IPR050280">
    <property type="entry name" value="OMP_Chaperone_SurA"/>
</dbReference>
<dbReference type="InterPro" id="IPR046357">
    <property type="entry name" value="PPIase_dom_sf"/>
</dbReference>
<dbReference type="InterPro" id="IPR000297">
    <property type="entry name" value="PPIase_PpiC"/>
</dbReference>
<dbReference type="InterPro" id="IPR023034">
    <property type="entry name" value="PPIase_SurA"/>
</dbReference>
<dbReference type="InterPro" id="IPR015391">
    <property type="entry name" value="SurA_N"/>
</dbReference>
<dbReference type="InterPro" id="IPR027304">
    <property type="entry name" value="Trigger_fact/SurA_dom_sf"/>
</dbReference>
<dbReference type="PANTHER" id="PTHR47637">
    <property type="entry name" value="CHAPERONE SURA"/>
    <property type="match status" value="1"/>
</dbReference>
<dbReference type="PANTHER" id="PTHR47637:SF1">
    <property type="entry name" value="CHAPERONE SURA"/>
    <property type="match status" value="1"/>
</dbReference>
<dbReference type="Pfam" id="PF13616">
    <property type="entry name" value="Rotamase_3"/>
    <property type="match status" value="1"/>
</dbReference>
<dbReference type="Pfam" id="PF09312">
    <property type="entry name" value="SurA_N"/>
    <property type="match status" value="1"/>
</dbReference>
<dbReference type="SUPFAM" id="SSF54534">
    <property type="entry name" value="FKBP-like"/>
    <property type="match status" value="2"/>
</dbReference>
<dbReference type="SUPFAM" id="SSF109998">
    <property type="entry name" value="Triger factor/SurA peptide-binding domain-like"/>
    <property type="match status" value="1"/>
</dbReference>
<dbReference type="PROSITE" id="PS50198">
    <property type="entry name" value="PPIC_PPIASE_2"/>
    <property type="match status" value="2"/>
</dbReference>
<organism>
    <name type="scientific">Burkholderia lata (strain ATCC 17760 / DSM 23089 / LMG 22485 / NCIMB 9086 / R18194 / 383)</name>
    <dbReference type="NCBI Taxonomy" id="482957"/>
    <lineage>
        <taxon>Bacteria</taxon>
        <taxon>Pseudomonadati</taxon>
        <taxon>Pseudomonadota</taxon>
        <taxon>Betaproteobacteria</taxon>
        <taxon>Burkholderiales</taxon>
        <taxon>Burkholderiaceae</taxon>
        <taxon>Burkholderia</taxon>
        <taxon>Burkholderia cepacia complex</taxon>
    </lineage>
</organism>
<proteinExistence type="inferred from homology"/>
<comment type="function">
    <text evidence="1">Chaperone involved in the correct folding and assembly of outer membrane proteins. Recognizes specific patterns of aromatic residues and the orientation of their side chains, which are found more frequently in integral outer membrane proteins. May act in both early periplasmic and late outer membrane-associated steps of protein maturation.</text>
</comment>
<comment type="catalytic activity">
    <reaction evidence="1">
        <text>[protein]-peptidylproline (omega=180) = [protein]-peptidylproline (omega=0)</text>
        <dbReference type="Rhea" id="RHEA:16237"/>
        <dbReference type="Rhea" id="RHEA-COMP:10747"/>
        <dbReference type="Rhea" id="RHEA-COMP:10748"/>
        <dbReference type="ChEBI" id="CHEBI:83833"/>
        <dbReference type="ChEBI" id="CHEBI:83834"/>
        <dbReference type="EC" id="5.2.1.8"/>
    </reaction>
</comment>
<comment type="subcellular location">
    <subcellularLocation>
        <location evidence="1">Periplasm</location>
    </subcellularLocation>
    <text evidence="1">Is capable of associating with the outer membrane.</text>
</comment>
<comment type="domain">
    <text evidence="1">The PPIase activity resides only in the second parvulin domain. The N-terminal region and the C-terminal tail are necessary and sufficient for the chaperone activity of SurA. The PPIase activity is dispensable for SurA to function as a chaperone. The N-terminal region and the C-terminal tail are also required for porin recognition.</text>
</comment>